<dbReference type="EC" id="1.1.1.85" evidence="1"/>
<dbReference type="EMBL" id="AE016826">
    <property type="protein sequence ID" value="AAO27201.1"/>
    <property type="molecule type" value="Genomic_DNA"/>
</dbReference>
<dbReference type="RefSeq" id="WP_011091602.1">
    <property type="nucleotide sequence ID" value="NC_004545.1"/>
</dbReference>
<dbReference type="SMR" id="P59515"/>
<dbReference type="STRING" id="224915.bbp_496"/>
<dbReference type="KEGG" id="bab:bbp_496"/>
<dbReference type="eggNOG" id="COG0473">
    <property type="taxonomic scope" value="Bacteria"/>
</dbReference>
<dbReference type="HOGENOM" id="CLU_031953_0_3_6"/>
<dbReference type="OrthoDB" id="9767905at2"/>
<dbReference type="UniPathway" id="UPA00048">
    <property type="reaction ID" value="UER00072"/>
</dbReference>
<dbReference type="Proteomes" id="UP000000601">
    <property type="component" value="Chromosome"/>
</dbReference>
<dbReference type="GO" id="GO:0005829">
    <property type="term" value="C:cytosol"/>
    <property type="evidence" value="ECO:0007669"/>
    <property type="project" value="TreeGrafter"/>
</dbReference>
<dbReference type="GO" id="GO:0003862">
    <property type="term" value="F:3-isopropylmalate dehydrogenase activity"/>
    <property type="evidence" value="ECO:0007669"/>
    <property type="project" value="UniProtKB-UniRule"/>
</dbReference>
<dbReference type="GO" id="GO:0000287">
    <property type="term" value="F:magnesium ion binding"/>
    <property type="evidence" value="ECO:0007669"/>
    <property type="project" value="InterPro"/>
</dbReference>
<dbReference type="GO" id="GO:0051287">
    <property type="term" value="F:NAD binding"/>
    <property type="evidence" value="ECO:0007669"/>
    <property type="project" value="InterPro"/>
</dbReference>
<dbReference type="GO" id="GO:0009098">
    <property type="term" value="P:L-leucine biosynthetic process"/>
    <property type="evidence" value="ECO:0007669"/>
    <property type="project" value="UniProtKB-UniRule"/>
</dbReference>
<dbReference type="FunFam" id="3.40.718.10:FF:000006">
    <property type="entry name" value="3-isopropylmalate dehydrogenase"/>
    <property type="match status" value="1"/>
</dbReference>
<dbReference type="Gene3D" id="3.40.718.10">
    <property type="entry name" value="Isopropylmalate Dehydrogenase"/>
    <property type="match status" value="1"/>
</dbReference>
<dbReference type="HAMAP" id="MF_01033">
    <property type="entry name" value="LeuB_type1"/>
    <property type="match status" value="1"/>
</dbReference>
<dbReference type="InterPro" id="IPR019818">
    <property type="entry name" value="IsoCit/isopropylmalate_DH_CS"/>
</dbReference>
<dbReference type="InterPro" id="IPR024084">
    <property type="entry name" value="IsoPropMal-DH-like_dom"/>
</dbReference>
<dbReference type="InterPro" id="IPR004429">
    <property type="entry name" value="Isopropylmalate_DH"/>
</dbReference>
<dbReference type="NCBIfam" id="TIGR00169">
    <property type="entry name" value="leuB"/>
    <property type="match status" value="1"/>
</dbReference>
<dbReference type="PANTHER" id="PTHR42979">
    <property type="entry name" value="3-ISOPROPYLMALATE DEHYDROGENASE"/>
    <property type="match status" value="1"/>
</dbReference>
<dbReference type="PANTHER" id="PTHR42979:SF1">
    <property type="entry name" value="3-ISOPROPYLMALATE DEHYDROGENASE"/>
    <property type="match status" value="1"/>
</dbReference>
<dbReference type="Pfam" id="PF00180">
    <property type="entry name" value="Iso_dh"/>
    <property type="match status" value="1"/>
</dbReference>
<dbReference type="SMART" id="SM01329">
    <property type="entry name" value="Iso_dh"/>
    <property type="match status" value="1"/>
</dbReference>
<dbReference type="SUPFAM" id="SSF53659">
    <property type="entry name" value="Isocitrate/Isopropylmalate dehydrogenase-like"/>
    <property type="match status" value="1"/>
</dbReference>
<dbReference type="PROSITE" id="PS00470">
    <property type="entry name" value="IDH_IMDH"/>
    <property type="match status" value="1"/>
</dbReference>
<protein>
    <recommendedName>
        <fullName evidence="1">3-isopropylmalate dehydrogenase</fullName>
        <ecNumber evidence="1">1.1.1.85</ecNumber>
    </recommendedName>
    <alternativeName>
        <fullName evidence="1">3-IPM-DH</fullName>
    </alternativeName>
    <alternativeName>
        <fullName evidence="1">Beta-IPM dehydrogenase</fullName>
        <shortName evidence="1">IMDH</shortName>
    </alternativeName>
</protein>
<reference key="1">
    <citation type="journal article" date="2003" name="Proc. Natl. Acad. Sci. U.S.A.">
        <title>Reductive genome evolution in Buchnera aphidicola.</title>
        <authorList>
            <person name="van Ham R.C.H.J."/>
            <person name="Kamerbeek J."/>
            <person name="Palacios C."/>
            <person name="Rausell C."/>
            <person name="Abascal F."/>
            <person name="Bastolla U."/>
            <person name="Fernandez J.M."/>
            <person name="Jimenez L."/>
            <person name="Postigo M."/>
            <person name="Silva F.J."/>
            <person name="Tamames J."/>
            <person name="Viguera E."/>
            <person name="Latorre A."/>
            <person name="Valencia A."/>
            <person name="Moran F."/>
            <person name="Moya A."/>
        </authorList>
    </citation>
    <scope>NUCLEOTIDE SEQUENCE [LARGE SCALE GENOMIC DNA]</scope>
    <source>
        <strain>Bp</strain>
    </source>
</reference>
<organism>
    <name type="scientific">Buchnera aphidicola subsp. Baizongia pistaciae (strain Bp)</name>
    <dbReference type="NCBI Taxonomy" id="224915"/>
    <lineage>
        <taxon>Bacteria</taxon>
        <taxon>Pseudomonadati</taxon>
        <taxon>Pseudomonadota</taxon>
        <taxon>Gammaproteobacteria</taxon>
        <taxon>Enterobacterales</taxon>
        <taxon>Erwiniaceae</taxon>
        <taxon>Buchnera</taxon>
    </lineage>
</organism>
<feature type="chain" id="PRO_0000083656" description="3-isopropylmalate dehydrogenase">
    <location>
        <begin position="1"/>
        <end position="366"/>
    </location>
</feature>
<feature type="binding site" evidence="1">
    <location>
        <begin position="78"/>
        <end position="91"/>
    </location>
    <ligand>
        <name>NAD(+)</name>
        <dbReference type="ChEBI" id="CHEBI:57540"/>
    </ligand>
</feature>
<feature type="binding site" evidence="1">
    <location>
        <position position="99"/>
    </location>
    <ligand>
        <name>substrate</name>
    </ligand>
</feature>
<feature type="binding site" evidence="1">
    <location>
        <position position="109"/>
    </location>
    <ligand>
        <name>substrate</name>
    </ligand>
</feature>
<feature type="binding site" evidence="1">
    <location>
        <position position="138"/>
    </location>
    <ligand>
        <name>substrate</name>
    </ligand>
</feature>
<feature type="binding site" evidence="1">
    <location>
        <position position="227"/>
    </location>
    <ligand>
        <name>Mg(2+)</name>
        <dbReference type="ChEBI" id="CHEBI:18420"/>
    </ligand>
</feature>
<feature type="binding site" evidence="1">
    <location>
        <position position="227"/>
    </location>
    <ligand>
        <name>substrate</name>
    </ligand>
</feature>
<feature type="binding site" evidence="1">
    <location>
        <position position="251"/>
    </location>
    <ligand>
        <name>Mg(2+)</name>
        <dbReference type="ChEBI" id="CHEBI:18420"/>
    </ligand>
</feature>
<feature type="binding site" evidence="1">
    <location>
        <position position="255"/>
    </location>
    <ligand>
        <name>Mg(2+)</name>
        <dbReference type="ChEBI" id="CHEBI:18420"/>
    </ligand>
</feature>
<feature type="binding site" evidence="1">
    <location>
        <begin position="285"/>
        <end position="297"/>
    </location>
    <ligand>
        <name>NAD(+)</name>
        <dbReference type="ChEBI" id="CHEBI:57540"/>
    </ligand>
</feature>
<feature type="site" description="Important for catalysis" evidence="1">
    <location>
        <position position="145"/>
    </location>
</feature>
<feature type="site" description="Important for catalysis" evidence="1">
    <location>
        <position position="195"/>
    </location>
</feature>
<evidence type="ECO:0000255" key="1">
    <source>
        <dbReference type="HAMAP-Rule" id="MF_01033"/>
    </source>
</evidence>
<comment type="function">
    <text evidence="1">Catalyzes the oxidation of 3-carboxy-2-hydroxy-4-methylpentanoate (3-isopropylmalate) to 3-carboxy-4-methyl-2-oxopentanoate. The product decarboxylates to 4-methyl-2 oxopentanoate.</text>
</comment>
<comment type="catalytic activity">
    <reaction evidence="1">
        <text>(2R,3S)-3-isopropylmalate + NAD(+) = 4-methyl-2-oxopentanoate + CO2 + NADH</text>
        <dbReference type="Rhea" id="RHEA:32271"/>
        <dbReference type="ChEBI" id="CHEBI:16526"/>
        <dbReference type="ChEBI" id="CHEBI:17865"/>
        <dbReference type="ChEBI" id="CHEBI:35121"/>
        <dbReference type="ChEBI" id="CHEBI:57540"/>
        <dbReference type="ChEBI" id="CHEBI:57945"/>
        <dbReference type="EC" id="1.1.1.85"/>
    </reaction>
</comment>
<comment type="cofactor">
    <cofactor evidence="1">
        <name>Mg(2+)</name>
        <dbReference type="ChEBI" id="CHEBI:18420"/>
    </cofactor>
    <cofactor evidence="1">
        <name>Mn(2+)</name>
        <dbReference type="ChEBI" id="CHEBI:29035"/>
    </cofactor>
    <text evidence="1">Binds 1 Mg(2+) or Mn(2+) ion per subunit.</text>
</comment>
<comment type="pathway">
    <text evidence="1">Amino-acid biosynthesis; L-leucine biosynthesis; L-leucine from 3-methyl-2-oxobutanoate: step 3/4.</text>
</comment>
<comment type="subunit">
    <text evidence="1">Homodimer.</text>
</comment>
<comment type="subcellular location">
    <subcellularLocation>
        <location evidence="1">Cytoplasm</location>
    </subcellularLocation>
</comment>
<comment type="similarity">
    <text evidence="1">Belongs to the isocitrate and isopropylmalate dehydrogenases family. LeuB type 1 subfamily.</text>
</comment>
<sequence>MKRNYKIAVLPGDGIGPEIMREGYKILRILKSKLSLNIMTQEFDVGGVAIDKYGVALPKKTLQGCRDSHAILFGSIGGPKWEDLPSHLQPERGALLPLRKYFNLFSNLRLARIYSGLEKLSPLKSRISNLGCDILCVRELTGGIYFGDPKGSKVSKSLNCAFDTEVYYQFEIERIAHMAFDLALTRRCKVTSIDKANVLESSMFWRKIVNRISTQYSQVKLSHLYVDNAAMQIIKNPSQFDVLLCSNLFGDILSDECAAITGSIGLLPSASLNDKNFGLYEPAGGSAPDIKGKNIANPIALILSIGMMMRYSFKLYDVADLIDWAVNKTLKLGYRTQDISENNKFINTSSMGDIIAEILANRIHKI</sequence>
<keyword id="KW-0028">Amino-acid biosynthesis</keyword>
<keyword id="KW-0100">Branched-chain amino acid biosynthesis</keyword>
<keyword id="KW-0963">Cytoplasm</keyword>
<keyword id="KW-0432">Leucine biosynthesis</keyword>
<keyword id="KW-0460">Magnesium</keyword>
<keyword id="KW-0464">Manganese</keyword>
<keyword id="KW-0479">Metal-binding</keyword>
<keyword id="KW-0520">NAD</keyword>
<keyword id="KW-0560">Oxidoreductase</keyword>
<keyword id="KW-1185">Reference proteome</keyword>
<name>LEU3_BUCBP</name>
<accession>P59515</accession>
<gene>
    <name evidence="1" type="primary">leuB</name>
    <name type="ordered locus">bbp_496</name>
</gene>
<proteinExistence type="inferred from homology"/>